<organism>
    <name type="scientific">Candida albicans (strain SC5314 / ATCC MYA-2876)</name>
    <name type="common">Yeast</name>
    <dbReference type="NCBI Taxonomy" id="237561"/>
    <lineage>
        <taxon>Eukaryota</taxon>
        <taxon>Fungi</taxon>
        <taxon>Dikarya</taxon>
        <taxon>Ascomycota</taxon>
        <taxon>Saccharomycotina</taxon>
        <taxon>Pichiomycetes</taxon>
        <taxon>Debaryomycetaceae</taxon>
        <taxon>Candida/Lodderomyces clade</taxon>
        <taxon>Candida</taxon>
    </lineage>
</organism>
<sequence length="370" mass="41894">MTTQKQHQQQHHLQSGQEKNKALTLIICVCGLYGTFLTWSILQERINTKPYGDNNEYFKAPIIINLIQALFASIIGFIYNYVTTTTTSTKTTTKTKTKTNSNPFSIFFTNGKQNCNVLKFMILISITSSIASPIGYKSLKHLDYLAYLLAKSCKLIPVMIVHFIFYQTKFPNYKYLVAGLVTLGVILFTMAHVTTKTKINDGNTLLGLTYLIGSMILDGLTNSTQDQLFKLPLENKLTSGKLMSLLNLFIFIWTSLYTIIFHKYEIDYTINFINNYPELLIDIIGFAICGAIGQVFIFIILEKFDSIILITATVTRKMLSMILSVILFGHHLSWEQWVGVGLVFGGIGLEAFIKFKQQSQQKMKIKSKVA</sequence>
<keyword id="KW-0256">Endoplasmic reticulum</keyword>
<keyword id="KW-0472">Membrane</keyword>
<keyword id="KW-1185">Reference proteome</keyword>
<keyword id="KW-0762">Sugar transport</keyword>
<keyword id="KW-0812">Transmembrane</keyword>
<keyword id="KW-1133">Transmembrane helix</keyword>
<keyword id="KW-0813">Transport</keyword>
<reference key="1">
    <citation type="journal article" date="2004" name="Proc. Natl. Acad. Sci. U.S.A.">
        <title>The diploid genome sequence of Candida albicans.</title>
        <authorList>
            <person name="Jones T."/>
            <person name="Federspiel N.A."/>
            <person name="Chibana H."/>
            <person name="Dungan J."/>
            <person name="Kalman S."/>
            <person name="Magee B.B."/>
            <person name="Newport G."/>
            <person name="Thorstenson Y.R."/>
            <person name="Agabian N."/>
            <person name="Magee P.T."/>
            <person name="Davis R.W."/>
            <person name="Scherer S."/>
        </authorList>
    </citation>
    <scope>NUCLEOTIDE SEQUENCE [LARGE SCALE GENOMIC DNA]</scope>
    <source>
        <strain>SC5314 / ATCC MYA-2876</strain>
    </source>
</reference>
<reference key="2">
    <citation type="journal article" date="2007" name="Genome Biol.">
        <title>Assembly of the Candida albicans genome into sixteen supercontigs aligned on the eight chromosomes.</title>
        <authorList>
            <person name="van het Hoog M."/>
            <person name="Rast T.J."/>
            <person name="Martchenko M."/>
            <person name="Grindle S."/>
            <person name="Dignard D."/>
            <person name="Hogues H."/>
            <person name="Cuomo C."/>
            <person name="Berriman M."/>
            <person name="Scherer S."/>
            <person name="Magee B.B."/>
            <person name="Whiteway M."/>
            <person name="Chibana H."/>
            <person name="Nantel A."/>
            <person name="Magee P.T."/>
        </authorList>
    </citation>
    <scope>GENOME REANNOTATION</scope>
    <source>
        <strain>SC5314 / ATCC MYA-2876</strain>
    </source>
</reference>
<reference key="3">
    <citation type="journal article" date="2013" name="Genome Biol.">
        <title>Assembly of a phased diploid Candida albicans genome facilitates allele-specific measurements and provides a simple model for repeat and indel structure.</title>
        <authorList>
            <person name="Muzzey D."/>
            <person name="Schwartz K."/>
            <person name="Weissman J.S."/>
            <person name="Sherlock G."/>
        </authorList>
    </citation>
    <scope>NUCLEOTIDE SEQUENCE [LARGE SCALE GENOMIC DNA]</scope>
    <scope>GENOME REANNOTATION</scope>
    <source>
        <strain>SC5314 / ATCC MYA-2876</strain>
    </source>
</reference>
<protein>
    <recommendedName>
        <fullName>UDP-galactose transporter homolog 1</fullName>
    </recommendedName>
</protein>
<comment type="function">
    <text evidence="1">May be involved in specific transport of UDP-Gal from the cytosol to the Golgi lumen. Involved in the maintenance of optimal conditions for the folding of secretory pathway proteins in the endoplasmic reticulum (By similarity).</text>
</comment>
<comment type="subcellular location">
    <subcellularLocation>
        <location evidence="1">Endoplasmic reticulum membrane</location>
        <topology evidence="1">Multi-pass membrane protein</topology>
    </subcellularLocation>
</comment>
<comment type="similarity">
    <text evidence="3">Belongs to the nucleotide-sugar transporter family. SLC35B subfamily.</text>
</comment>
<gene>
    <name type="primary">HUT1</name>
    <name type="ordered locus">CAALFM_C306980WA</name>
    <name type="ORF">CaO19.14095</name>
    <name type="ORF">CaO19.6803</name>
</gene>
<dbReference type="EMBL" id="CP017625">
    <property type="protein sequence ID" value="AOW28701.1"/>
    <property type="molecule type" value="Genomic_DNA"/>
</dbReference>
<dbReference type="RefSeq" id="XP_719898.1">
    <property type="nucleotide sequence ID" value="XM_714805.1"/>
</dbReference>
<dbReference type="SMR" id="Q5ADN8"/>
<dbReference type="FunCoup" id="Q5ADN8">
    <property type="interactions" value="486"/>
</dbReference>
<dbReference type="STRING" id="237561.Q5ADN8"/>
<dbReference type="EnsemblFungi" id="C3_06980W_A-T">
    <property type="protein sequence ID" value="C3_06980W_A-T-p1"/>
    <property type="gene ID" value="C3_06980W_A"/>
</dbReference>
<dbReference type="GeneID" id="3638505"/>
<dbReference type="KEGG" id="cal:CAALFM_C306980WA"/>
<dbReference type="CGD" id="CAL0000194078">
    <property type="gene designation" value="HUT1"/>
</dbReference>
<dbReference type="VEuPathDB" id="FungiDB:C3_06980W_A"/>
<dbReference type="eggNOG" id="KOG1581">
    <property type="taxonomic scope" value="Eukaryota"/>
</dbReference>
<dbReference type="HOGENOM" id="CLU_036019_0_2_1"/>
<dbReference type="InParanoid" id="Q5ADN8"/>
<dbReference type="OMA" id="CGAIGQV"/>
<dbReference type="OrthoDB" id="1601at2759"/>
<dbReference type="PRO" id="PR:Q5ADN8"/>
<dbReference type="Proteomes" id="UP000000559">
    <property type="component" value="Chromosome 3"/>
</dbReference>
<dbReference type="GO" id="GO:0005789">
    <property type="term" value="C:endoplasmic reticulum membrane"/>
    <property type="evidence" value="ECO:0000318"/>
    <property type="project" value="GO_Central"/>
</dbReference>
<dbReference type="GO" id="GO:0000139">
    <property type="term" value="C:Golgi membrane"/>
    <property type="evidence" value="ECO:0000318"/>
    <property type="project" value="GO_Central"/>
</dbReference>
<dbReference type="GO" id="GO:0005459">
    <property type="term" value="F:UDP-galactose transmembrane transporter activity"/>
    <property type="evidence" value="ECO:0000318"/>
    <property type="project" value="GO_Central"/>
</dbReference>
<dbReference type="GO" id="GO:0005460">
    <property type="term" value="F:UDP-glucose transmembrane transporter activity"/>
    <property type="evidence" value="ECO:0000318"/>
    <property type="project" value="GO_Central"/>
</dbReference>
<dbReference type="GO" id="GO:0072334">
    <property type="term" value="P:UDP-galactose transmembrane transport"/>
    <property type="evidence" value="ECO:0000318"/>
    <property type="project" value="GO_Central"/>
</dbReference>
<dbReference type="GO" id="GO:0120112">
    <property type="term" value="P:UDP-glucose transmembrane transport into endoplasmic reticulum"/>
    <property type="evidence" value="ECO:0007669"/>
    <property type="project" value="EnsemblFungi"/>
</dbReference>
<dbReference type="InterPro" id="IPR013657">
    <property type="entry name" value="SCL35B1-4/HUT1"/>
</dbReference>
<dbReference type="PANTHER" id="PTHR10778">
    <property type="entry name" value="SOLUTE CARRIER FAMILY 35 MEMBER B"/>
    <property type="match status" value="1"/>
</dbReference>
<dbReference type="PANTHER" id="PTHR10778:SF10">
    <property type="entry name" value="SOLUTE CARRIER FAMILY 35 MEMBER B1"/>
    <property type="match status" value="1"/>
</dbReference>
<dbReference type="Pfam" id="PF08449">
    <property type="entry name" value="UAA"/>
    <property type="match status" value="1"/>
</dbReference>
<dbReference type="SUPFAM" id="SSF103481">
    <property type="entry name" value="Multidrug resistance efflux transporter EmrE"/>
    <property type="match status" value="1"/>
</dbReference>
<proteinExistence type="inferred from homology"/>
<feature type="chain" id="PRO_0000213405" description="UDP-galactose transporter homolog 1">
    <location>
        <begin position="1"/>
        <end position="370"/>
    </location>
</feature>
<feature type="transmembrane region" description="Helical" evidence="2">
    <location>
        <begin position="22"/>
        <end position="42"/>
    </location>
</feature>
<feature type="transmembrane region" description="Helical" evidence="2">
    <location>
        <begin position="62"/>
        <end position="82"/>
    </location>
</feature>
<feature type="transmembrane region" description="Helical" evidence="2">
    <location>
        <begin position="115"/>
        <end position="135"/>
    </location>
</feature>
<feature type="transmembrane region" description="Helical" evidence="2">
    <location>
        <begin position="145"/>
        <end position="165"/>
    </location>
</feature>
<feature type="transmembrane region" description="Helical" evidence="2">
    <location>
        <begin position="175"/>
        <end position="195"/>
    </location>
</feature>
<feature type="transmembrane region" description="Helical" evidence="2">
    <location>
        <begin position="204"/>
        <end position="224"/>
    </location>
</feature>
<feature type="transmembrane region" description="Helical" evidence="2">
    <location>
        <begin position="242"/>
        <end position="262"/>
    </location>
</feature>
<feature type="transmembrane region" description="Helical" evidence="2">
    <location>
        <begin position="280"/>
        <end position="300"/>
    </location>
</feature>
<feature type="transmembrane region" description="Helical" evidence="2">
    <location>
        <begin position="307"/>
        <end position="327"/>
    </location>
</feature>
<feature type="transmembrane region" description="Helical" evidence="2">
    <location>
        <begin position="333"/>
        <end position="353"/>
    </location>
</feature>
<accession>Q5ADN8</accession>
<accession>A0A1D8PKM2</accession>
<name>HUT1_CANAL</name>
<evidence type="ECO:0000250" key="1"/>
<evidence type="ECO:0000255" key="2"/>
<evidence type="ECO:0000305" key="3"/>